<protein>
    <recommendedName>
        <fullName evidence="1">Methionyl-tRNA formyltransferase</fullName>
        <ecNumber evidence="1">2.1.2.9</ecNumber>
    </recommendedName>
</protein>
<proteinExistence type="inferred from homology"/>
<gene>
    <name evidence="1" type="primary">fmt</name>
    <name type="ordered locus">SPJ_1631</name>
</gene>
<dbReference type="EC" id="2.1.2.9" evidence="1"/>
<dbReference type="EMBL" id="CP000919">
    <property type="protein sequence ID" value="ACO18941.1"/>
    <property type="molecule type" value="Genomic_DNA"/>
</dbReference>
<dbReference type="RefSeq" id="WP_000163704.1">
    <property type="nucleotide sequence ID" value="NC_012466.1"/>
</dbReference>
<dbReference type="SMR" id="C1CFV7"/>
<dbReference type="KEGG" id="sjj:SPJ_1631"/>
<dbReference type="HOGENOM" id="CLU_033347_1_1_9"/>
<dbReference type="Proteomes" id="UP000002206">
    <property type="component" value="Chromosome"/>
</dbReference>
<dbReference type="GO" id="GO:0005829">
    <property type="term" value="C:cytosol"/>
    <property type="evidence" value="ECO:0007669"/>
    <property type="project" value="TreeGrafter"/>
</dbReference>
<dbReference type="GO" id="GO:0004479">
    <property type="term" value="F:methionyl-tRNA formyltransferase activity"/>
    <property type="evidence" value="ECO:0007669"/>
    <property type="project" value="UniProtKB-UniRule"/>
</dbReference>
<dbReference type="CDD" id="cd08646">
    <property type="entry name" value="FMT_core_Met-tRNA-FMT_N"/>
    <property type="match status" value="1"/>
</dbReference>
<dbReference type="CDD" id="cd08704">
    <property type="entry name" value="Met_tRNA_FMT_C"/>
    <property type="match status" value="1"/>
</dbReference>
<dbReference type="FunFam" id="3.10.25.10:FF:000004">
    <property type="entry name" value="Methionyl-tRNA formyltransferase"/>
    <property type="match status" value="1"/>
</dbReference>
<dbReference type="FunFam" id="3.40.50.170:FF:000004">
    <property type="entry name" value="Methionyl-tRNA formyltransferase"/>
    <property type="match status" value="1"/>
</dbReference>
<dbReference type="Gene3D" id="3.10.25.10">
    <property type="entry name" value="Formyl transferase, C-terminal domain"/>
    <property type="match status" value="1"/>
</dbReference>
<dbReference type="Gene3D" id="3.40.50.170">
    <property type="entry name" value="Formyl transferase, N-terminal domain"/>
    <property type="match status" value="1"/>
</dbReference>
<dbReference type="HAMAP" id="MF_00182">
    <property type="entry name" value="Formyl_trans"/>
    <property type="match status" value="1"/>
</dbReference>
<dbReference type="InterPro" id="IPR005794">
    <property type="entry name" value="Fmt"/>
</dbReference>
<dbReference type="InterPro" id="IPR005793">
    <property type="entry name" value="Formyl_trans_C"/>
</dbReference>
<dbReference type="InterPro" id="IPR037022">
    <property type="entry name" value="Formyl_trans_C_sf"/>
</dbReference>
<dbReference type="InterPro" id="IPR002376">
    <property type="entry name" value="Formyl_transf_N"/>
</dbReference>
<dbReference type="InterPro" id="IPR036477">
    <property type="entry name" value="Formyl_transf_N_sf"/>
</dbReference>
<dbReference type="InterPro" id="IPR011034">
    <property type="entry name" value="Formyl_transferase-like_C_sf"/>
</dbReference>
<dbReference type="InterPro" id="IPR001555">
    <property type="entry name" value="GART_AS"/>
</dbReference>
<dbReference type="InterPro" id="IPR044135">
    <property type="entry name" value="Met-tRNA-FMT_C"/>
</dbReference>
<dbReference type="InterPro" id="IPR041711">
    <property type="entry name" value="Met-tRNA-FMT_N"/>
</dbReference>
<dbReference type="NCBIfam" id="TIGR00460">
    <property type="entry name" value="fmt"/>
    <property type="match status" value="1"/>
</dbReference>
<dbReference type="PANTHER" id="PTHR11138">
    <property type="entry name" value="METHIONYL-TRNA FORMYLTRANSFERASE"/>
    <property type="match status" value="1"/>
</dbReference>
<dbReference type="PANTHER" id="PTHR11138:SF5">
    <property type="entry name" value="METHIONYL-TRNA FORMYLTRANSFERASE, MITOCHONDRIAL"/>
    <property type="match status" value="1"/>
</dbReference>
<dbReference type="Pfam" id="PF02911">
    <property type="entry name" value="Formyl_trans_C"/>
    <property type="match status" value="1"/>
</dbReference>
<dbReference type="Pfam" id="PF00551">
    <property type="entry name" value="Formyl_trans_N"/>
    <property type="match status" value="1"/>
</dbReference>
<dbReference type="SUPFAM" id="SSF50486">
    <property type="entry name" value="FMT C-terminal domain-like"/>
    <property type="match status" value="1"/>
</dbReference>
<dbReference type="SUPFAM" id="SSF53328">
    <property type="entry name" value="Formyltransferase"/>
    <property type="match status" value="1"/>
</dbReference>
<dbReference type="PROSITE" id="PS00373">
    <property type="entry name" value="GART"/>
    <property type="match status" value="1"/>
</dbReference>
<reference key="1">
    <citation type="journal article" date="2010" name="Genome Biol.">
        <title>Structure and dynamics of the pan-genome of Streptococcus pneumoniae and closely related species.</title>
        <authorList>
            <person name="Donati C."/>
            <person name="Hiller N.L."/>
            <person name="Tettelin H."/>
            <person name="Muzzi A."/>
            <person name="Croucher N.J."/>
            <person name="Angiuoli S.V."/>
            <person name="Oggioni M."/>
            <person name="Dunning Hotopp J.C."/>
            <person name="Hu F.Z."/>
            <person name="Riley D.R."/>
            <person name="Covacci A."/>
            <person name="Mitchell T.J."/>
            <person name="Bentley S.D."/>
            <person name="Kilian M."/>
            <person name="Ehrlich G.D."/>
            <person name="Rappuoli R."/>
            <person name="Moxon E.R."/>
            <person name="Masignani V."/>
        </authorList>
    </citation>
    <scope>NUCLEOTIDE SEQUENCE [LARGE SCALE GENOMIC DNA]</scope>
    <source>
        <strain>JJA</strain>
    </source>
</reference>
<feature type="chain" id="PRO_1000190045" description="Methionyl-tRNA formyltransferase">
    <location>
        <begin position="1"/>
        <end position="311"/>
    </location>
</feature>
<feature type="binding site" evidence="1">
    <location>
        <begin position="110"/>
        <end position="113"/>
    </location>
    <ligand>
        <name>(6S)-5,6,7,8-tetrahydrofolate</name>
        <dbReference type="ChEBI" id="CHEBI:57453"/>
    </ligand>
</feature>
<sequence length="311" mass="33971">MTKLIFMGTPDFSATVLKGLLTDDRYEILAVVTQPDRAVGRKKVIQETPVKQAAKEAGLSIYQPEKLSGSPEMEELMKLGADGIVTAAFGQFLPSKLLDSMDFAVNVHASLLPRHRGGAPIHYALIQGDEEAGVTIMEMVKEMDAGDMISRRSIPITDEDNVGTLFEKLALVGRDLLLDTLPAYIAGDIKPEPQDTSQVTFSPNIKPEEEKLDWNKTNRQLFNQIRGMNPWPVAHAFLKGDRFKIYEALPVEGQGNPGEILSIGKKELIVATAEGALSLKQVQPAGKPKMDIASFLNGVGRTLTVGERFGD</sequence>
<comment type="function">
    <text evidence="1">Attaches a formyl group to the free amino group of methionyl-tRNA(fMet). The formyl group appears to play a dual role in the initiator identity of N-formylmethionyl-tRNA by promoting its recognition by IF2 and preventing the misappropriation of this tRNA by the elongation apparatus.</text>
</comment>
<comment type="catalytic activity">
    <reaction evidence="1">
        <text>L-methionyl-tRNA(fMet) + (6R)-10-formyltetrahydrofolate = N-formyl-L-methionyl-tRNA(fMet) + (6S)-5,6,7,8-tetrahydrofolate + H(+)</text>
        <dbReference type="Rhea" id="RHEA:24380"/>
        <dbReference type="Rhea" id="RHEA-COMP:9952"/>
        <dbReference type="Rhea" id="RHEA-COMP:9953"/>
        <dbReference type="ChEBI" id="CHEBI:15378"/>
        <dbReference type="ChEBI" id="CHEBI:57453"/>
        <dbReference type="ChEBI" id="CHEBI:78530"/>
        <dbReference type="ChEBI" id="CHEBI:78844"/>
        <dbReference type="ChEBI" id="CHEBI:195366"/>
        <dbReference type="EC" id="2.1.2.9"/>
    </reaction>
</comment>
<comment type="similarity">
    <text evidence="1">Belongs to the Fmt family.</text>
</comment>
<evidence type="ECO:0000255" key="1">
    <source>
        <dbReference type="HAMAP-Rule" id="MF_00182"/>
    </source>
</evidence>
<accession>C1CFV7</accession>
<organism>
    <name type="scientific">Streptococcus pneumoniae (strain JJA)</name>
    <dbReference type="NCBI Taxonomy" id="488222"/>
    <lineage>
        <taxon>Bacteria</taxon>
        <taxon>Bacillati</taxon>
        <taxon>Bacillota</taxon>
        <taxon>Bacilli</taxon>
        <taxon>Lactobacillales</taxon>
        <taxon>Streptococcaceae</taxon>
        <taxon>Streptococcus</taxon>
    </lineage>
</organism>
<keyword id="KW-0648">Protein biosynthesis</keyword>
<keyword id="KW-0808">Transferase</keyword>
<name>FMT_STRZJ</name>